<evidence type="ECO:0000255" key="1">
    <source>
        <dbReference type="HAMAP-Rule" id="MF_00089"/>
    </source>
</evidence>
<gene>
    <name evidence="1" type="primary">thiC2</name>
    <name type="ordered locus">Msp_0251</name>
</gene>
<organism>
    <name type="scientific">Methanosphaera stadtmanae (strain ATCC 43021 / DSM 3091 / JCM 11832 / MCB-3)</name>
    <dbReference type="NCBI Taxonomy" id="339860"/>
    <lineage>
        <taxon>Archaea</taxon>
        <taxon>Methanobacteriati</taxon>
        <taxon>Methanobacteriota</taxon>
        <taxon>Methanomada group</taxon>
        <taxon>Methanobacteria</taxon>
        <taxon>Methanobacteriales</taxon>
        <taxon>Methanobacteriaceae</taxon>
        <taxon>Methanosphaera</taxon>
    </lineage>
</organism>
<keyword id="KW-0004">4Fe-4S</keyword>
<keyword id="KW-0408">Iron</keyword>
<keyword id="KW-0411">Iron-sulfur</keyword>
<keyword id="KW-0456">Lyase</keyword>
<keyword id="KW-0479">Metal-binding</keyword>
<keyword id="KW-1185">Reference proteome</keyword>
<keyword id="KW-0949">S-adenosyl-L-methionine</keyword>
<keyword id="KW-0784">Thiamine biosynthesis</keyword>
<keyword id="KW-0862">Zinc</keyword>
<name>THIC2_METST</name>
<sequence>MTQMLEAMRGNITEAMKTVAADEKLDPEYIRKMVAKGYIAIPDNNQRETVAVGIGENLRTKVNATIGTSTDINDLDMELEKAKIAEEAGADTLMELSIGGDLDNIRRTVLKNTKKPVGSVPIYQTAVEAIEKDGSAINMDPDDMLKNIEKQAKDGIDFMAIHCSVNRETLKRLKRQGRNGGLVSRGGSFISSWMVHNDCENPLYENYDQVLDIVEEYDVCLSMANAMRAGALTDSTDRAQIQELIVLGELVDRARERGVQTIVEGPGHIPINEIETNINIQKKMCKNAPFYMLGPIVTDIAPAYDHIVSAIGAAQCARYGANFICYVTPAEHLALPGPEDVREGVIATRIGAHAGDLAIDLERFGEDDIAMAHARKSLNWTEQYEHAMWPADAKAIRDKRPPEADDTCTMCGNYCAIKIVNQWLDKADKDAFDN</sequence>
<proteinExistence type="inferred from homology"/>
<comment type="function">
    <text evidence="1">Catalyzes the synthesis of the hydroxymethylpyrimidine phosphate (HMP-P) moiety of thiamine from aminoimidazole ribotide (AIR) in a radical S-adenosyl-L-methionine (SAM)-dependent reaction.</text>
</comment>
<comment type="catalytic activity">
    <reaction evidence="1">
        <text>5-amino-1-(5-phospho-beta-D-ribosyl)imidazole + S-adenosyl-L-methionine = 4-amino-2-methyl-5-(phosphooxymethyl)pyrimidine + CO + 5'-deoxyadenosine + formate + L-methionine + 3 H(+)</text>
        <dbReference type="Rhea" id="RHEA:24840"/>
        <dbReference type="ChEBI" id="CHEBI:15378"/>
        <dbReference type="ChEBI" id="CHEBI:15740"/>
        <dbReference type="ChEBI" id="CHEBI:17245"/>
        <dbReference type="ChEBI" id="CHEBI:17319"/>
        <dbReference type="ChEBI" id="CHEBI:57844"/>
        <dbReference type="ChEBI" id="CHEBI:58354"/>
        <dbReference type="ChEBI" id="CHEBI:59789"/>
        <dbReference type="ChEBI" id="CHEBI:137981"/>
        <dbReference type="EC" id="4.1.99.17"/>
    </reaction>
</comment>
<comment type="cofactor">
    <cofactor evidence="1">
        <name>[4Fe-4S] cluster</name>
        <dbReference type="ChEBI" id="CHEBI:49883"/>
    </cofactor>
    <text evidence="1">Binds 1 [4Fe-4S] cluster per subunit. The cluster is coordinated with 3 cysteines and an exchangeable S-adenosyl-L-methionine.</text>
</comment>
<comment type="pathway">
    <text evidence="1">Cofactor biosynthesis; thiamine diphosphate biosynthesis.</text>
</comment>
<comment type="similarity">
    <text evidence="1">Belongs to the ThiC family.</text>
</comment>
<dbReference type="EC" id="4.1.99.17" evidence="1"/>
<dbReference type="EMBL" id="CP000102">
    <property type="protein sequence ID" value="ABC56667.1"/>
    <property type="molecule type" value="Genomic_DNA"/>
</dbReference>
<dbReference type="SMR" id="Q2NHG6"/>
<dbReference type="STRING" id="339860.Msp_0251"/>
<dbReference type="KEGG" id="mst:Msp_0251"/>
<dbReference type="eggNOG" id="arCOG02741">
    <property type="taxonomic scope" value="Archaea"/>
</dbReference>
<dbReference type="HOGENOM" id="CLU_013181_2_2_2"/>
<dbReference type="OrthoDB" id="335406at2157"/>
<dbReference type="UniPathway" id="UPA00060"/>
<dbReference type="Proteomes" id="UP000001931">
    <property type="component" value="Chromosome"/>
</dbReference>
<dbReference type="GO" id="GO:0051539">
    <property type="term" value="F:4 iron, 4 sulfur cluster binding"/>
    <property type="evidence" value="ECO:0007669"/>
    <property type="project" value="UniProtKB-KW"/>
</dbReference>
<dbReference type="GO" id="GO:0016830">
    <property type="term" value="F:carbon-carbon lyase activity"/>
    <property type="evidence" value="ECO:0007669"/>
    <property type="project" value="InterPro"/>
</dbReference>
<dbReference type="GO" id="GO:0008270">
    <property type="term" value="F:zinc ion binding"/>
    <property type="evidence" value="ECO:0007669"/>
    <property type="project" value="UniProtKB-UniRule"/>
</dbReference>
<dbReference type="GO" id="GO:0009228">
    <property type="term" value="P:thiamine biosynthetic process"/>
    <property type="evidence" value="ECO:0007669"/>
    <property type="project" value="UniProtKB-KW"/>
</dbReference>
<dbReference type="GO" id="GO:0009229">
    <property type="term" value="P:thiamine diphosphate biosynthetic process"/>
    <property type="evidence" value="ECO:0007669"/>
    <property type="project" value="UniProtKB-UniRule"/>
</dbReference>
<dbReference type="FunFam" id="3.20.20.540:FF:000001">
    <property type="entry name" value="Phosphomethylpyrimidine synthase"/>
    <property type="match status" value="1"/>
</dbReference>
<dbReference type="Gene3D" id="3.20.20.540">
    <property type="entry name" value="Radical SAM ThiC family, central domain"/>
    <property type="match status" value="1"/>
</dbReference>
<dbReference type="HAMAP" id="MF_00089">
    <property type="entry name" value="ThiC"/>
    <property type="match status" value="1"/>
</dbReference>
<dbReference type="InterPro" id="IPR029062">
    <property type="entry name" value="Class_I_gatase-like"/>
</dbReference>
<dbReference type="InterPro" id="IPR037509">
    <property type="entry name" value="ThiC"/>
</dbReference>
<dbReference type="InterPro" id="IPR038521">
    <property type="entry name" value="ThiC/Bza_core_dom"/>
</dbReference>
<dbReference type="InterPro" id="IPR002817">
    <property type="entry name" value="ThiC/BzaA/B"/>
</dbReference>
<dbReference type="NCBIfam" id="NF009895">
    <property type="entry name" value="PRK13352.1"/>
    <property type="match status" value="1"/>
</dbReference>
<dbReference type="NCBIfam" id="TIGR00190">
    <property type="entry name" value="thiC"/>
    <property type="match status" value="1"/>
</dbReference>
<dbReference type="PANTHER" id="PTHR30557:SF1">
    <property type="entry name" value="PHOSPHOMETHYLPYRIMIDINE SYNTHASE, CHLOROPLASTIC"/>
    <property type="match status" value="1"/>
</dbReference>
<dbReference type="PANTHER" id="PTHR30557">
    <property type="entry name" value="THIAMINE BIOSYNTHESIS PROTEIN THIC"/>
    <property type="match status" value="1"/>
</dbReference>
<dbReference type="Pfam" id="PF01964">
    <property type="entry name" value="ThiC_Rad_SAM"/>
    <property type="match status" value="1"/>
</dbReference>
<dbReference type="SFLD" id="SFLDF00407">
    <property type="entry name" value="phosphomethylpyrimidine_syntha"/>
    <property type="match status" value="1"/>
</dbReference>
<dbReference type="SFLD" id="SFLDG01114">
    <property type="entry name" value="phosphomethylpyrimidine_syntha"/>
    <property type="match status" value="1"/>
</dbReference>
<dbReference type="SFLD" id="SFLDS00113">
    <property type="entry name" value="Radical_SAM_Phosphomethylpyrim"/>
    <property type="match status" value="1"/>
</dbReference>
<dbReference type="SUPFAM" id="SSF52317">
    <property type="entry name" value="Class I glutamine amidotransferase-like"/>
    <property type="match status" value="1"/>
</dbReference>
<feature type="chain" id="PRO_0000242327" description="Phosphomethylpyrimidine synthase 2">
    <location>
        <begin position="1"/>
        <end position="434"/>
    </location>
</feature>
<feature type="binding site" evidence="1">
    <location>
        <position position="94"/>
    </location>
    <ligand>
        <name>substrate</name>
    </ligand>
</feature>
<feature type="binding site" evidence="1">
    <location>
        <position position="123"/>
    </location>
    <ligand>
        <name>substrate</name>
    </ligand>
</feature>
<feature type="binding site" evidence="1">
    <location>
        <position position="162"/>
    </location>
    <ligand>
        <name>substrate</name>
    </ligand>
</feature>
<feature type="binding site" evidence="1">
    <location>
        <begin position="184"/>
        <end position="186"/>
    </location>
    <ligand>
        <name>substrate</name>
    </ligand>
</feature>
<feature type="binding site" evidence="1">
    <location>
        <begin position="225"/>
        <end position="228"/>
    </location>
    <ligand>
        <name>substrate</name>
    </ligand>
</feature>
<feature type="binding site" evidence="1">
    <location>
        <position position="264"/>
    </location>
    <ligand>
        <name>substrate</name>
    </ligand>
</feature>
<feature type="binding site" evidence="1">
    <location>
        <position position="268"/>
    </location>
    <ligand>
        <name>Zn(2+)</name>
        <dbReference type="ChEBI" id="CHEBI:29105"/>
    </ligand>
</feature>
<feature type="binding site" evidence="1">
    <location>
        <position position="291"/>
    </location>
    <ligand>
        <name>substrate</name>
    </ligand>
</feature>
<feature type="binding site" evidence="1">
    <location>
        <position position="332"/>
    </location>
    <ligand>
        <name>Zn(2+)</name>
        <dbReference type="ChEBI" id="CHEBI:29105"/>
    </ligand>
</feature>
<feature type="binding site" evidence="1">
    <location>
        <position position="408"/>
    </location>
    <ligand>
        <name>[4Fe-4S] cluster</name>
        <dbReference type="ChEBI" id="CHEBI:49883"/>
        <note>4Fe-4S-S-AdoMet</note>
    </ligand>
</feature>
<feature type="binding site" evidence="1">
    <location>
        <position position="411"/>
    </location>
    <ligand>
        <name>[4Fe-4S] cluster</name>
        <dbReference type="ChEBI" id="CHEBI:49883"/>
        <note>4Fe-4S-S-AdoMet</note>
    </ligand>
</feature>
<feature type="binding site" evidence="1">
    <location>
        <position position="415"/>
    </location>
    <ligand>
        <name>[4Fe-4S] cluster</name>
        <dbReference type="ChEBI" id="CHEBI:49883"/>
        <note>4Fe-4S-S-AdoMet</note>
    </ligand>
</feature>
<accession>Q2NHG6</accession>
<reference key="1">
    <citation type="journal article" date="2006" name="J. Bacteriol.">
        <title>The genome sequence of Methanosphaera stadtmanae reveals why this human intestinal archaeon is restricted to methanol and H2 for methane formation and ATP synthesis.</title>
        <authorList>
            <person name="Fricke W.F."/>
            <person name="Seedorf H."/>
            <person name="Henne A."/>
            <person name="Kruer M."/>
            <person name="Liesegang H."/>
            <person name="Hedderich R."/>
            <person name="Gottschalk G."/>
            <person name="Thauer R.K."/>
        </authorList>
    </citation>
    <scope>NUCLEOTIDE SEQUENCE [LARGE SCALE GENOMIC DNA]</scope>
    <source>
        <strain>ATCC 43021 / DSM 3091 / JCM 11832 / MCB-3</strain>
    </source>
</reference>
<protein>
    <recommendedName>
        <fullName evidence="1">Phosphomethylpyrimidine synthase 2</fullName>
        <ecNumber evidence="1">4.1.99.17</ecNumber>
    </recommendedName>
    <alternativeName>
        <fullName evidence="1">Hydroxymethylpyrimidine phosphate synthase 2</fullName>
        <shortName evidence="1">HMP-P synthase 2</shortName>
        <shortName evidence="1">HMP-phosphate synthase 2</shortName>
        <shortName evidence="1">HMPP synthase 2</shortName>
    </alternativeName>
    <alternativeName>
        <fullName evidence="1">Thiamine biosynthesis protein ThiC 2</fullName>
    </alternativeName>
</protein>